<reference key="1">
    <citation type="journal article" date="1997" name="Nature">
        <title>The nucleotide sequence of Saccharomyces cerevisiae chromosome XVI.</title>
        <authorList>
            <person name="Bussey H."/>
            <person name="Storms R.K."/>
            <person name="Ahmed A."/>
            <person name="Albermann K."/>
            <person name="Allen E."/>
            <person name="Ansorge W."/>
            <person name="Araujo R."/>
            <person name="Aparicio A."/>
            <person name="Barrell B.G."/>
            <person name="Badcock K."/>
            <person name="Benes V."/>
            <person name="Botstein D."/>
            <person name="Bowman S."/>
            <person name="Brueckner M."/>
            <person name="Carpenter J."/>
            <person name="Cherry J.M."/>
            <person name="Chung E."/>
            <person name="Churcher C.M."/>
            <person name="Coster F."/>
            <person name="Davis K."/>
            <person name="Davis R.W."/>
            <person name="Dietrich F.S."/>
            <person name="Delius H."/>
            <person name="DiPaolo T."/>
            <person name="Dubois E."/>
            <person name="Duesterhoeft A."/>
            <person name="Duncan M."/>
            <person name="Floeth M."/>
            <person name="Fortin N."/>
            <person name="Friesen J.D."/>
            <person name="Fritz C."/>
            <person name="Goffeau A."/>
            <person name="Hall J."/>
            <person name="Hebling U."/>
            <person name="Heumann K."/>
            <person name="Hilbert H."/>
            <person name="Hillier L.W."/>
            <person name="Hunicke-Smith S."/>
            <person name="Hyman R.W."/>
            <person name="Johnston M."/>
            <person name="Kalman S."/>
            <person name="Kleine K."/>
            <person name="Komp C."/>
            <person name="Kurdi O."/>
            <person name="Lashkari D."/>
            <person name="Lew H."/>
            <person name="Lin A."/>
            <person name="Lin D."/>
            <person name="Louis E.J."/>
            <person name="Marathe R."/>
            <person name="Messenguy F."/>
            <person name="Mewes H.-W."/>
            <person name="Mirtipati S."/>
            <person name="Moestl D."/>
            <person name="Mueller-Auer S."/>
            <person name="Namath A."/>
            <person name="Nentwich U."/>
            <person name="Oefner P."/>
            <person name="Pearson D."/>
            <person name="Petel F.X."/>
            <person name="Pohl T.M."/>
            <person name="Purnelle B."/>
            <person name="Rajandream M.A."/>
            <person name="Rechmann S."/>
            <person name="Rieger M."/>
            <person name="Riles L."/>
            <person name="Roberts D."/>
            <person name="Schaefer M."/>
            <person name="Scharfe M."/>
            <person name="Scherens B."/>
            <person name="Schramm S."/>
            <person name="Schroeder M."/>
            <person name="Sdicu A.-M."/>
            <person name="Tettelin H."/>
            <person name="Urrestarazu L.A."/>
            <person name="Ushinsky S."/>
            <person name="Vierendeels F."/>
            <person name="Vissers S."/>
            <person name="Voss H."/>
            <person name="Walsh S.V."/>
            <person name="Wambutt R."/>
            <person name="Wang Y."/>
            <person name="Wedler E."/>
            <person name="Wedler H."/>
            <person name="Winnett E."/>
            <person name="Zhong W.-W."/>
            <person name="Zollner A."/>
            <person name="Vo D.H."/>
            <person name="Hani J."/>
        </authorList>
    </citation>
    <scope>NUCLEOTIDE SEQUENCE [LARGE SCALE GENOMIC DNA]</scope>
    <source>
        <strain>ATCC 204508 / S288c</strain>
    </source>
</reference>
<reference key="2">
    <citation type="journal article" date="2014" name="G3 (Bethesda)">
        <title>The reference genome sequence of Saccharomyces cerevisiae: Then and now.</title>
        <authorList>
            <person name="Engel S.R."/>
            <person name="Dietrich F.S."/>
            <person name="Fisk D.G."/>
            <person name="Binkley G."/>
            <person name="Balakrishnan R."/>
            <person name="Costanzo M.C."/>
            <person name="Dwight S.S."/>
            <person name="Hitz B.C."/>
            <person name="Karra K."/>
            <person name="Nash R.S."/>
            <person name="Weng S."/>
            <person name="Wong E.D."/>
            <person name="Lloyd P."/>
            <person name="Skrzypek M.S."/>
            <person name="Miyasato S.R."/>
            <person name="Simison M."/>
            <person name="Cherry J.M."/>
        </authorList>
    </citation>
    <scope>GENOME REANNOTATION</scope>
    <source>
        <strain>ATCC 204508 / S288c</strain>
    </source>
</reference>
<reference key="3">
    <citation type="journal article" date="1999" name="Proc. Natl. Acad. Sci. U.S.A.">
        <title>Yeast and human genes that affect the Escherichia coli SOS response.</title>
        <authorList>
            <person name="Perkins E.L."/>
            <person name="Sterling J.F."/>
            <person name="Hashem V.I."/>
            <person name="Resnick M.A."/>
        </authorList>
    </citation>
    <scope>FUNCTION</scope>
</reference>
<feature type="chain" id="PRO_0000255980" description="Uncharacterized protein YPR078C">
    <location>
        <begin position="1"/>
        <end position="372"/>
    </location>
</feature>
<feature type="region of interest" description="Disordered" evidence="1">
    <location>
        <begin position="328"/>
        <end position="353"/>
    </location>
</feature>
<name>YP078_YEAST</name>
<comment type="function">
    <text evidence="2">Induces the SOS system when expressed in E.coli, therefore, it may play a role in DNA metabolism and/or in genome stability.</text>
</comment>
<dbReference type="EMBL" id="U51033">
    <property type="protein sequence ID" value="AAB68127.1"/>
    <property type="molecule type" value="Genomic_DNA"/>
</dbReference>
<dbReference type="EMBL" id="BK006949">
    <property type="protein sequence ID" value="DAA11496.1"/>
    <property type="molecule type" value="Genomic_DNA"/>
</dbReference>
<dbReference type="PIR" id="S69064">
    <property type="entry name" value="S69064"/>
</dbReference>
<dbReference type="RefSeq" id="NP_015403.1">
    <property type="nucleotide sequence ID" value="NM_001184175.1"/>
</dbReference>
<dbReference type="BioGRID" id="36249">
    <property type="interactions" value="122"/>
</dbReference>
<dbReference type="DIP" id="DIP-1945N"/>
<dbReference type="FunCoup" id="Q06813">
    <property type="interactions" value="33"/>
</dbReference>
<dbReference type="IntAct" id="Q06813">
    <property type="interactions" value="1"/>
</dbReference>
<dbReference type="MINT" id="Q06813"/>
<dbReference type="STRING" id="4932.YPR078C"/>
<dbReference type="iPTMnet" id="Q06813"/>
<dbReference type="PaxDb" id="4932-YPR078C"/>
<dbReference type="PeptideAtlas" id="Q06813"/>
<dbReference type="EnsemblFungi" id="YPR078C_mRNA">
    <property type="protein sequence ID" value="YPR078C"/>
    <property type="gene ID" value="YPR078C"/>
</dbReference>
<dbReference type="GeneID" id="856193"/>
<dbReference type="KEGG" id="sce:YPR078C"/>
<dbReference type="AGR" id="SGD:S000006282"/>
<dbReference type="SGD" id="S000006282">
    <property type="gene designation" value="YPR078C"/>
</dbReference>
<dbReference type="VEuPathDB" id="FungiDB:YPR078C"/>
<dbReference type="HOGENOM" id="CLU_748321_0_0_1"/>
<dbReference type="InParanoid" id="Q06813"/>
<dbReference type="OMA" id="VKIDETC"/>
<dbReference type="OrthoDB" id="4056598at2759"/>
<dbReference type="BioCyc" id="YEAST:G3O-34222-MONOMER"/>
<dbReference type="BioGRID-ORCS" id="856193">
    <property type="hits" value="0 hits in 10 CRISPR screens"/>
</dbReference>
<dbReference type="PRO" id="PR:Q06813"/>
<dbReference type="Proteomes" id="UP000002311">
    <property type="component" value="Chromosome XVI"/>
</dbReference>
<dbReference type="RNAct" id="Q06813">
    <property type="molecule type" value="protein"/>
</dbReference>
<protein>
    <recommendedName>
        <fullName>Uncharacterized protein YPR078C</fullName>
    </recommendedName>
</protein>
<proteinExistence type="predicted"/>
<evidence type="ECO:0000256" key="1">
    <source>
        <dbReference type="SAM" id="MobiDB-lite"/>
    </source>
</evidence>
<evidence type="ECO:0000269" key="2">
    <source>
    </source>
</evidence>
<accession>Q06813</accession>
<accession>D6W480</accession>
<keyword id="KW-1185">Reference proteome</keyword>
<gene>
    <name type="ordered locus">YPR078C</name>
</gene>
<sequence length="372" mass="42594">MQTISGVLPTVLSPSELRSDDERTFQFDEEAEITTHLTESEDLRRLINETAQLGVRVDHIHDKTDQEIARLEKVIKEVTESDTFFRSCSGWFKTNKNFSDSESSSNTQLKSLSQLHGRYDRDWRQRLNKWFRKNKSKLALPSDNNLEEVNDDKVYGYGEDLMERGKTPYFSDIDDFMNGLNIISPLTPDDFENDDTLVKIDETCQIHSASEPEKTSISPTFGKNIKKELVTDDTESIISGPPLQENKKTLLKYRYVRTSLDMLGSEKSSSKNNSGGMFRIFHKSANFGDKNQENVPRVWDTLRNNLGREIYLLQGRFKKWTTKHQNLKKGQPCKDEDAVTVPLPSSDPGKETQLETKLCFVPEPGDQPLVQA</sequence>
<organism>
    <name type="scientific">Saccharomyces cerevisiae (strain ATCC 204508 / S288c)</name>
    <name type="common">Baker's yeast</name>
    <dbReference type="NCBI Taxonomy" id="559292"/>
    <lineage>
        <taxon>Eukaryota</taxon>
        <taxon>Fungi</taxon>
        <taxon>Dikarya</taxon>
        <taxon>Ascomycota</taxon>
        <taxon>Saccharomycotina</taxon>
        <taxon>Saccharomycetes</taxon>
        <taxon>Saccharomycetales</taxon>
        <taxon>Saccharomycetaceae</taxon>
        <taxon>Saccharomyces</taxon>
    </lineage>
</organism>